<proteinExistence type="inferred from homology"/>
<feature type="chain" id="PRO_0000222391" description="Uncharacterized 15.9 kDa protein in MSP 5'region">
    <location>
        <begin position="1"/>
        <end position="138"/>
    </location>
</feature>
<accession>P25097</accession>
<organism>
    <name type="scientific">Simulium iridescent virus</name>
    <name type="common">IIV-22</name>
    <name type="synonym">Insect iridescent virus type 22</name>
    <dbReference type="NCBI Taxonomy" id="10489"/>
    <lineage>
        <taxon>Viruses</taxon>
        <taxon>Varidnaviria</taxon>
        <taxon>Bamfordvirae</taxon>
        <taxon>Nucleocytoviricota</taxon>
        <taxon>Megaviricetes</taxon>
        <taxon>Pimascovirales</taxon>
        <taxon>Iridoviridae</taxon>
        <taxon>Betairidovirinae</taxon>
        <taxon>Chloriridovirus</taxon>
        <taxon>Invertebrate iridescent virus 22</taxon>
    </lineage>
</organism>
<organismHost>
    <name type="scientific">Simulium</name>
    <dbReference type="NCBI Taxonomy" id="7191"/>
</organismHost>
<sequence>MDSNALIKRCSSSKNKINGLKVPTVTIKVEEVCLVKSNLKIARKNLKKIEKIYDDLNLINPKQLKGINGLINPLLHTIYYEVWFMFMDDIVHIQKNLIDYFEYANKGEEQPIKNNEFVDKIKMLMKPISVDLSTPSKA</sequence>
<evidence type="ECO:0000305" key="1"/>
<protein>
    <recommendedName>
        <fullName>Uncharacterized 15.9 kDa protein in MSP 5'region</fullName>
    </recommendedName>
</protein>
<dbReference type="EMBL" id="M32799">
    <property type="protein sequence ID" value="AAA66584.1"/>
    <property type="molecule type" value="Genomic_DNA"/>
</dbReference>
<dbReference type="PIR" id="A37075">
    <property type="entry name" value="A37075"/>
</dbReference>
<comment type="similarity">
    <text evidence="1">Belongs to the IIV-3 015R family.</text>
</comment>
<name>VF015_IRV22</name>
<reference key="1">
    <citation type="journal article" date="1990" name="Virology">
        <title>Identification and characterization of the gene encoding the major structural protein of insect iridescent virus type 22.</title>
        <authorList>
            <person name="Cameron I.R."/>
        </authorList>
    </citation>
    <scope>NUCLEOTIDE SEQUENCE [GENOMIC DNA]</scope>
</reference>